<keyword id="KW-0010">Activator</keyword>
<keyword id="KW-0090">Biological rhythms</keyword>
<keyword id="KW-0963">Cytoplasm</keyword>
<keyword id="KW-0238">DNA-binding</keyword>
<keyword id="KW-0539">Nucleus</keyword>
<keyword id="KW-1185">Reference proteome</keyword>
<keyword id="KW-0678">Repressor</keyword>
<keyword id="KW-0804">Transcription</keyword>
<keyword id="KW-0805">Transcription regulation</keyword>
<evidence type="ECO:0000250" key="1"/>
<evidence type="ECO:0000250" key="2">
    <source>
        <dbReference type="UniProtKB" id="O08750"/>
    </source>
</evidence>
<evidence type="ECO:0000250" key="3">
    <source>
        <dbReference type="UniProtKB" id="Q16649"/>
    </source>
</evidence>
<evidence type="ECO:0000255" key="4">
    <source>
        <dbReference type="PROSITE-ProRule" id="PRU00978"/>
    </source>
</evidence>
<evidence type="ECO:0000256" key="5">
    <source>
        <dbReference type="SAM" id="MobiDB-lite"/>
    </source>
</evidence>
<evidence type="ECO:0000305" key="6"/>
<comment type="function">
    <text evidence="2">May act as a transcriptional regulator of a number of proteins of the circadian clock.</text>
</comment>
<comment type="subunit">
    <text evidence="3">Homodimer (By similarity). Binds DNA as a dimer (By similarity).</text>
</comment>
<comment type="subcellular location">
    <subcellularLocation>
        <location evidence="1">Cytoplasm</location>
    </subcellularLocation>
    <subcellularLocation>
        <location evidence="4">Nucleus</location>
    </subcellularLocation>
</comment>
<comment type="similarity">
    <text evidence="6">Belongs to the bZIP family. NFIL3 subfamily.</text>
</comment>
<feature type="chain" id="PRO_0000292671" description="Nuclear factor interleukin-3-regulated protein">
    <location>
        <begin position="1"/>
        <end position="462"/>
    </location>
</feature>
<feature type="domain" description="bZIP" evidence="4">
    <location>
        <begin position="63"/>
        <end position="126"/>
    </location>
</feature>
<feature type="region of interest" description="Basic motif" evidence="4">
    <location>
        <begin position="69"/>
        <end position="85"/>
    </location>
</feature>
<feature type="region of interest" description="Leucine-zipper" evidence="4">
    <location>
        <begin position="91"/>
        <end position="112"/>
    </location>
</feature>
<feature type="region of interest" description="Disordered" evidence="5">
    <location>
        <begin position="172"/>
        <end position="210"/>
    </location>
</feature>
<feature type="region of interest" description="Disordered" evidence="5">
    <location>
        <begin position="238"/>
        <end position="289"/>
    </location>
</feature>
<feature type="compositionally biased region" description="Polar residues" evidence="5">
    <location>
        <begin position="178"/>
        <end position="199"/>
    </location>
</feature>
<feature type="compositionally biased region" description="Basic and acidic residues" evidence="5">
    <location>
        <begin position="200"/>
        <end position="210"/>
    </location>
</feature>
<feature type="compositionally biased region" description="Polar residues" evidence="5">
    <location>
        <begin position="238"/>
        <end position="254"/>
    </location>
</feature>
<proteinExistence type="evidence at transcript level"/>
<gene>
    <name type="primary">nfil3</name>
</gene>
<organism>
    <name type="scientific">Danio rerio</name>
    <name type="common">Zebrafish</name>
    <name type="synonym">Brachydanio rerio</name>
    <dbReference type="NCBI Taxonomy" id="7955"/>
    <lineage>
        <taxon>Eukaryota</taxon>
        <taxon>Metazoa</taxon>
        <taxon>Chordata</taxon>
        <taxon>Craniata</taxon>
        <taxon>Vertebrata</taxon>
        <taxon>Euteleostomi</taxon>
        <taxon>Actinopterygii</taxon>
        <taxon>Neopterygii</taxon>
        <taxon>Teleostei</taxon>
        <taxon>Ostariophysi</taxon>
        <taxon>Cypriniformes</taxon>
        <taxon>Danionidae</taxon>
        <taxon>Danioninae</taxon>
        <taxon>Danio</taxon>
    </lineage>
</organism>
<accession>Q68EL6</accession>
<sequence length="462" mass="51501">MQAIKKEPPCSGPYGGEDALVLAVALQGTDRDLINHKLSTLPFKSKSTSCRRKREFIPDEKKDNLYWERRRKNNEAAKRSREKRRLNDMVLENKLMALGEENASLKAELLSLKLRFGLVSSAAYAQEVQNISTSTAALYQDFMSPSATKDSYPSDLEPTRLTSSCISVIKHSPHSALSDGSDSSTVTQGSPLINISRSPDSIKQEPLETGRYSKERISPYELYRNYLSSPFPGNFSQPSPFLQIARSSSNSPRTSDGDDGAVSKSSDNEDEQQVPKGPVPTRSDSQSVIVSTLKVPDSSASALPHKLRIKARAIQIKVEAIDPDYESSGKSSFPVDMSARRRYQMSQCATPEYIQSSLSPMSFQMTNVQDWNHRPKEWHEDHQEALTSYKYRQCPDSPRPVPNKLIVDLENDSYANSESENLYLKQGIEDLSAEVACLKRLISKQQGSVIESTKSTTEIDSS</sequence>
<dbReference type="EMBL" id="BC080210">
    <property type="protein sequence ID" value="AAH80210.1"/>
    <property type="molecule type" value="mRNA"/>
</dbReference>
<dbReference type="RefSeq" id="NP_001004120.1">
    <property type="nucleotide sequence ID" value="NM_001004120.3"/>
</dbReference>
<dbReference type="SMR" id="Q68EL6"/>
<dbReference type="FunCoup" id="Q68EL6">
    <property type="interactions" value="1392"/>
</dbReference>
<dbReference type="STRING" id="7955.ENSDARP00000119920"/>
<dbReference type="PaxDb" id="7955-ENSDARP00000119920"/>
<dbReference type="Ensembl" id="ENSDART00000190913">
    <property type="protein sequence ID" value="ENSDARP00000153020"/>
    <property type="gene ID" value="ENSDARG00000110085"/>
</dbReference>
<dbReference type="GeneID" id="445509"/>
<dbReference type="KEGG" id="dre:445509"/>
<dbReference type="AGR" id="ZFIN:ZDB-GENE-040822-28"/>
<dbReference type="CTD" id="4783"/>
<dbReference type="ZFIN" id="ZDB-GENE-040822-28">
    <property type="gene designation" value="nfil3"/>
</dbReference>
<dbReference type="eggNOG" id="KOG3119">
    <property type="taxonomic scope" value="Eukaryota"/>
</dbReference>
<dbReference type="InParanoid" id="Q68EL6"/>
<dbReference type="OMA" id="PVDMTSK"/>
<dbReference type="OrthoDB" id="6151507at2759"/>
<dbReference type="PhylomeDB" id="Q68EL6"/>
<dbReference type="PRO" id="PR:Q68EL6"/>
<dbReference type="Proteomes" id="UP000000437">
    <property type="component" value="Alternate scaffold 10"/>
</dbReference>
<dbReference type="Proteomes" id="UP000000437">
    <property type="component" value="Chromosome 10"/>
</dbReference>
<dbReference type="Bgee" id="ENSDARG00000110085">
    <property type="expression patterns" value="Expressed in post-anal tail bud and 6 other cell types or tissues"/>
</dbReference>
<dbReference type="GO" id="GO:0005737">
    <property type="term" value="C:cytoplasm"/>
    <property type="evidence" value="ECO:0007669"/>
    <property type="project" value="UniProtKB-SubCell"/>
</dbReference>
<dbReference type="GO" id="GO:0005634">
    <property type="term" value="C:nucleus"/>
    <property type="evidence" value="ECO:0000318"/>
    <property type="project" value="GO_Central"/>
</dbReference>
<dbReference type="GO" id="GO:0003677">
    <property type="term" value="F:DNA binding"/>
    <property type="evidence" value="ECO:0007669"/>
    <property type="project" value="UniProtKB-KW"/>
</dbReference>
<dbReference type="GO" id="GO:0003700">
    <property type="term" value="F:DNA-binding transcription factor activity"/>
    <property type="evidence" value="ECO:0007669"/>
    <property type="project" value="InterPro"/>
</dbReference>
<dbReference type="GO" id="GO:0007623">
    <property type="term" value="P:circadian rhythm"/>
    <property type="evidence" value="ECO:0000318"/>
    <property type="project" value="GO_Central"/>
</dbReference>
<dbReference type="GO" id="GO:0007507">
    <property type="term" value="P:heart development"/>
    <property type="evidence" value="ECO:0000315"/>
    <property type="project" value="ZFIN"/>
</dbReference>
<dbReference type="GO" id="GO:0006955">
    <property type="term" value="P:immune response"/>
    <property type="evidence" value="ECO:0007669"/>
    <property type="project" value="InterPro"/>
</dbReference>
<dbReference type="GO" id="GO:0061515">
    <property type="term" value="P:myeloid cell development"/>
    <property type="evidence" value="ECO:0000315"/>
    <property type="project" value="ZFIN"/>
</dbReference>
<dbReference type="GO" id="GO:0045892">
    <property type="term" value="P:negative regulation of DNA-templated transcription"/>
    <property type="evidence" value="ECO:0000250"/>
    <property type="project" value="UniProtKB"/>
</dbReference>
<dbReference type="GO" id="GO:0006355">
    <property type="term" value="P:regulation of DNA-templated transcription"/>
    <property type="evidence" value="ECO:0000318"/>
    <property type="project" value="GO_Central"/>
</dbReference>
<dbReference type="GO" id="GO:0006366">
    <property type="term" value="P:transcription by RNA polymerase II"/>
    <property type="evidence" value="ECO:0007669"/>
    <property type="project" value="InterPro"/>
</dbReference>
<dbReference type="CDD" id="cd14694">
    <property type="entry name" value="bZIP_NFIL3"/>
    <property type="match status" value="1"/>
</dbReference>
<dbReference type="FunFam" id="1.20.5.170:FF:000025">
    <property type="entry name" value="nuclear factor interleukin-3-regulated protein-like"/>
    <property type="match status" value="1"/>
</dbReference>
<dbReference type="Gene3D" id="1.20.5.170">
    <property type="match status" value="1"/>
</dbReference>
<dbReference type="InterPro" id="IPR004827">
    <property type="entry name" value="bZIP"/>
</dbReference>
<dbReference type="InterPro" id="IPR046347">
    <property type="entry name" value="bZIP_sf"/>
</dbReference>
<dbReference type="InterPro" id="IPR047229">
    <property type="entry name" value="NFIL3-like"/>
</dbReference>
<dbReference type="InterPro" id="IPR047106">
    <property type="entry name" value="NFIL3-like_bZIP"/>
</dbReference>
<dbReference type="InterPro" id="IPR016743">
    <property type="entry name" value="NFIL3/E4BP4"/>
</dbReference>
<dbReference type="InterPro" id="IPR010533">
    <property type="entry name" value="Vert_IL3-reg_TF"/>
</dbReference>
<dbReference type="PANTHER" id="PTHR15284">
    <property type="entry name" value="NUCLEAR FACTOR INTERLEUKIN-3-REGULATED PROTEIN"/>
    <property type="match status" value="1"/>
</dbReference>
<dbReference type="PANTHER" id="PTHR15284:SF1">
    <property type="entry name" value="NUCLEAR FACTOR INTERLEUKIN-3-REGULATED PROTEIN"/>
    <property type="match status" value="1"/>
</dbReference>
<dbReference type="Pfam" id="PF07716">
    <property type="entry name" value="bZIP_2"/>
    <property type="match status" value="1"/>
</dbReference>
<dbReference type="Pfam" id="PF06529">
    <property type="entry name" value="Vert_IL3-reg_TF"/>
    <property type="match status" value="1"/>
</dbReference>
<dbReference type="PIRSF" id="PIRSF019029">
    <property type="entry name" value="bZIP_E4BP4"/>
    <property type="match status" value="1"/>
</dbReference>
<dbReference type="SMART" id="SM00338">
    <property type="entry name" value="BRLZ"/>
    <property type="match status" value="1"/>
</dbReference>
<dbReference type="SUPFAM" id="SSF57959">
    <property type="entry name" value="Leucine zipper domain"/>
    <property type="match status" value="1"/>
</dbReference>
<dbReference type="PROSITE" id="PS50217">
    <property type="entry name" value="BZIP"/>
    <property type="match status" value="1"/>
</dbReference>
<dbReference type="PROSITE" id="PS00036">
    <property type="entry name" value="BZIP_BASIC"/>
    <property type="match status" value="1"/>
</dbReference>
<reference key="1">
    <citation type="submission" date="2003-06" db="EMBL/GenBank/DDBJ databases">
        <authorList>
            <consortium name="NIH - Zebrafish Gene Collection (ZGC) project"/>
        </authorList>
    </citation>
    <scope>NUCLEOTIDE SEQUENCE [LARGE SCALE MRNA]</scope>
    <source>
        <tissue>Embryo</tissue>
    </source>
</reference>
<protein>
    <recommendedName>
        <fullName>Nuclear factor interleukin-3-regulated protein</fullName>
    </recommendedName>
</protein>
<name>NFIL3_DANRE</name>